<organism>
    <name type="scientific">Pseudomonas syringae pv. syringae (strain B728a)</name>
    <dbReference type="NCBI Taxonomy" id="205918"/>
    <lineage>
        <taxon>Bacteria</taxon>
        <taxon>Pseudomonadati</taxon>
        <taxon>Pseudomonadota</taxon>
        <taxon>Gammaproteobacteria</taxon>
        <taxon>Pseudomonadales</taxon>
        <taxon>Pseudomonadaceae</taxon>
        <taxon>Pseudomonas</taxon>
        <taxon>Pseudomonas syringae</taxon>
    </lineage>
</organism>
<name>SPED_PSEU2</name>
<reference key="1">
    <citation type="journal article" date="2005" name="Proc. Natl. Acad. Sci. U.S.A.">
        <title>Comparison of the complete genome sequences of Pseudomonas syringae pv. syringae B728a and pv. tomato DC3000.</title>
        <authorList>
            <person name="Feil H."/>
            <person name="Feil W.S."/>
            <person name="Chain P."/>
            <person name="Larimer F."/>
            <person name="Dibartolo G."/>
            <person name="Copeland A."/>
            <person name="Lykidis A."/>
            <person name="Trong S."/>
            <person name="Nolan M."/>
            <person name="Goltsman E."/>
            <person name="Thiel J."/>
            <person name="Malfatti S."/>
            <person name="Loper J.E."/>
            <person name="Lapidus A."/>
            <person name="Detter J.C."/>
            <person name="Land M."/>
            <person name="Richardson P.M."/>
            <person name="Kyrpides N.C."/>
            <person name="Ivanova N."/>
            <person name="Lindow S.E."/>
        </authorList>
    </citation>
    <scope>NUCLEOTIDE SEQUENCE [LARGE SCALE GENOMIC DNA]</scope>
    <source>
        <strain>B728a</strain>
    </source>
</reference>
<feature type="chain" id="PRO_0000273605" description="S-adenosylmethionine decarboxylase beta chain" evidence="1">
    <location>
        <begin position="1"/>
        <end position="112"/>
    </location>
</feature>
<feature type="chain" id="PRO_0000273606" description="S-adenosylmethionine decarboxylase alpha chain" evidence="1">
    <location>
        <begin position="113"/>
        <end position="264"/>
    </location>
</feature>
<feature type="active site" description="Schiff-base intermediate with substrate; via pyruvic acid" evidence="1">
    <location>
        <position position="113"/>
    </location>
</feature>
<feature type="active site" description="Proton acceptor; for processing activity" evidence="1">
    <location>
        <position position="118"/>
    </location>
</feature>
<feature type="active site" description="Proton donor; for catalytic activity" evidence="1">
    <location>
        <position position="141"/>
    </location>
</feature>
<feature type="site" description="Cleavage (non-hydrolytic); by autolysis" evidence="1">
    <location>
        <begin position="112"/>
        <end position="113"/>
    </location>
</feature>
<feature type="modified residue" description="Pyruvic acid (Ser); by autocatalysis" evidence="1">
    <location>
        <position position="113"/>
    </location>
</feature>
<dbReference type="EC" id="4.1.1.50" evidence="1"/>
<dbReference type="EMBL" id="CP000075">
    <property type="protein sequence ID" value="AAY39605.1"/>
    <property type="molecule type" value="Genomic_DNA"/>
</dbReference>
<dbReference type="RefSeq" id="WP_003316303.1">
    <property type="nucleotide sequence ID" value="NC_007005.1"/>
</dbReference>
<dbReference type="RefSeq" id="YP_237643.1">
    <property type="nucleotide sequence ID" value="NC_007005.1"/>
</dbReference>
<dbReference type="SMR" id="Q4ZML7"/>
<dbReference type="STRING" id="205918.Psyr_4575"/>
<dbReference type="GeneID" id="77280410"/>
<dbReference type="KEGG" id="psb:Psyr_4575"/>
<dbReference type="PATRIC" id="fig|205918.7.peg.4714"/>
<dbReference type="eggNOG" id="COG1586">
    <property type="taxonomic scope" value="Bacteria"/>
</dbReference>
<dbReference type="HOGENOM" id="CLU_092007_0_0_6"/>
<dbReference type="OrthoDB" id="5290709at2"/>
<dbReference type="UniPathway" id="UPA00331">
    <property type="reaction ID" value="UER00451"/>
</dbReference>
<dbReference type="Proteomes" id="UP000000426">
    <property type="component" value="Chromosome"/>
</dbReference>
<dbReference type="GO" id="GO:0005829">
    <property type="term" value="C:cytosol"/>
    <property type="evidence" value="ECO:0007669"/>
    <property type="project" value="TreeGrafter"/>
</dbReference>
<dbReference type="GO" id="GO:0004014">
    <property type="term" value="F:adenosylmethionine decarboxylase activity"/>
    <property type="evidence" value="ECO:0007669"/>
    <property type="project" value="UniProtKB-UniRule"/>
</dbReference>
<dbReference type="GO" id="GO:0008295">
    <property type="term" value="P:spermidine biosynthetic process"/>
    <property type="evidence" value="ECO:0007669"/>
    <property type="project" value="UniProtKB-UniRule"/>
</dbReference>
<dbReference type="Gene3D" id="3.60.90.10">
    <property type="entry name" value="S-adenosylmethionine decarboxylase"/>
    <property type="match status" value="1"/>
</dbReference>
<dbReference type="HAMAP" id="MF_00465">
    <property type="entry name" value="AdoMetDC_2"/>
    <property type="match status" value="1"/>
</dbReference>
<dbReference type="InterPro" id="IPR003826">
    <property type="entry name" value="AdoMetDC_fam_prok"/>
</dbReference>
<dbReference type="InterPro" id="IPR009165">
    <property type="entry name" value="S-AdoMet_deCO2ase_bac"/>
</dbReference>
<dbReference type="InterPro" id="IPR016067">
    <property type="entry name" value="S-AdoMet_deCO2ase_core"/>
</dbReference>
<dbReference type="NCBIfam" id="TIGR03331">
    <property type="entry name" value="SAM_DCase_Eco"/>
    <property type="match status" value="1"/>
</dbReference>
<dbReference type="PANTHER" id="PTHR33866">
    <property type="entry name" value="S-ADENOSYLMETHIONINE DECARBOXYLASE PROENZYME"/>
    <property type="match status" value="1"/>
</dbReference>
<dbReference type="PANTHER" id="PTHR33866:SF1">
    <property type="entry name" value="S-ADENOSYLMETHIONINE DECARBOXYLASE PROENZYME"/>
    <property type="match status" value="1"/>
</dbReference>
<dbReference type="Pfam" id="PF02675">
    <property type="entry name" value="AdoMet_dc"/>
    <property type="match status" value="1"/>
</dbReference>
<dbReference type="PIRSF" id="PIRSF001356">
    <property type="entry name" value="SAM_decarboxylas"/>
    <property type="match status" value="1"/>
</dbReference>
<dbReference type="SUPFAM" id="SSF56276">
    <property type="entry name" value="S-adenosylmethionine decarboxylase"/>
    <property type="match status" value="1"/>
</dbReference>
<comment type="function">
    <text evidence="1">Catalyzes the decarboxylation of S-adenosylmethionine to S-adenosylmethioninamine (dcAdoMet), the propylamine donor required for the synthesis of the polyamines spermine and spermidine from the diamine putrescine.</text>
</comment>
<comment type="catalytic activity">
    <reaction evidence="1">
        <text>S-adenosyl-L-methionine + H(+) = S-adenosyl 3-(methylsulfanyl)propylamine + CO2</text>
        <dbReference type="Rhea" id="RHEA:15981"/>
        <dbReference type="ChEBI" id="CHEBI:15378"/>
        <dbReference type="ChEBI" id="CHEBI:16526"/>
        <dbReference type="ChEBI" id="CHEBI:57443"/>
        <dbReference type="ChEBI" id="CHEBI:59789"/>
        <dbReference type="EC" id="4.1.1.50"/>
    </reaction>
</comment>
<comment type="cofactor">
    <cofactor evidence="1">
        <name>pyruvate</name>
        <dbReference type="ChEBI" id="CHEBI:15361"/>
    </cofactor>
    <text evidence="1">Binds 1 pyruvoyl group covalently per subunit.</text>
</comment>
<comment type="pathway">
    <text evidence="1">Amine and polyamine biosynthesis; S-adenosylmethioninamine biosynthesis; S-adenosylmethioninamine from S-adenosyl-L-methionine: step 1/1.</text>
</comment>
<comment type="subunit">
    <text evidence="1">Heterooctamer of four alpha and four beta chains arranged as a tetramer of alpha/beta heterodimers.</text>
</comment>
<comment type="PTM">
    <text evidence="1">Is synthesized initially as an inactive proenzyme. Formation of the active enzyme involves a self-maturation process in which the active site pyruvoyl group is generated from an internal serine residue via an autocatalytic post-translational modification. Two non-identical subunits are generated from the proenzyme in this reaction, and the pyruvate is formed at the N-terminus of the alpha chain, which is derived from the carboxyl end of the proenzyme. The post-translation cleavage follows an unusual pathway, termed non-hydrolytic serinolysis, in which the side chain hydroxyl group of the serine supplies its oxygen atom to form the C-terminus of the beta chain, while the remainder of the serine residue undergoes an oxidative deamination to produce ammonia and the pyruvoyl group blocking the N-terminus of the alpha chain.</text>
</comment>
<comment type="similarity">
    <text evidence="1">Belongs to the prokaryotic AdoMetDC family. Type 2 subfamily.</text>
</comment>
<keyword id="KW-0068">Autocatalytic cleavage</keyword>
<keyword id="KW-0210">Decarboxylase</keyword>
<keyword id="KW-0456">Lyase</keyword>
<keyword id="KW-0620">Polyamine biosynthesis</keyword>
<keyword id="KW-0670">Pyruvate</keyword>
<keyword id="KW-0949">S-adenosyl-L-methionine</keyword>
<keyword id="KW-0704">Schiff base</keyword>
<keyword id="KW-0745">Spermidine biosynthesis</keyword>
<keyword id="KW-0865">Zymogen</keyword>
<evidence type="ECO:0000255" key="1">
    <source>
        <dbReference type="HAMAP-Rule" id="MF_00465"/>
    </source>
</evidence>
<protein>
    <recommendedName>
        <fullName evidence="1">S-adenosylmethionine decarboxylase proenzyme</fullName>
        <shortName evidence="1">AdoMetDC</shortName>
        <shortName evidence="1">SAMDC</shortName>
        <ecNumber evidence="1">4.1.1.50</ecNumber>
    </recommendedName>
    <component>
        <recommendedName>
            <fullName evidence="1">S-adenosylmethionine decarboxylase beta chain</fullName>
        </recommendedName>
    </component>
    <component>
        <recommendedName>
            <fullName evidence="1">S-adenosylmethionine decarboxylase alpha chain</fullName>
        </recommendedName>
    </component>
</protein>
<sequence length="264" mass="30173">MKSKLKLHGFNNLTKTLSFNIYDICYAETPQDQQAYVEYINSVYDAERLTRILTDVVDIIGANILNIARQDYDPQGASVTILISEQPVTPTESQIEESPGPLPETILAHLDKSHITVHTYPEIHPVDGIATFRVDIDVSTCGVISPLKALNYLIHKFESDIVTVDYRVRGFTRDVEGKKHFIDHEINSIQNYLSEDTRNGYQMTDVNVYQENLFHTKMLLKQFELDNYLFGDATSNLSPEQREQVTAKVKHEMLEIFYGRNVAV</sequence>
<gene>
    <name evidence="1" type="primary">speD</name>
    <name type="ordered locus">Psyr_4575</name>
</gene>
<proteinExistence type="inferred from homology"/>
<accession>Q4ZML7</accession>